<feature type="chain" id="PRO_0000426823" description="4-aminobutyrate aminotransferase">
    <location>
        <begin position="1"/>
        <end position="449"/>
    </location>
</feature>
<feature type="modified residue" description="N6-(pyridoxal phosphate)lysine" evidence="1">
    <location>
        <position position="294"/>
    </location>
</feature>
<dbReference type="EC" id="2.6.1.19"/>
<dbReference type="EC" id="2.6.1.22"/>
<dbReference type="EMBL" id="AE000516">
    <property type="protein sequence ID" value="AAK46979.1"/>
    <property type="molecule type" value="Genomic_DNA"/>
</dbReference>
<dbReference type="PIR" id="D70726">
    <property type="entry name" value="D70726"/>
</dbReference>
<dbReference type="RefSeq" id="WP_003413395.1">
    <property type="nucleotide sequence ID" value="NZ_KK341227.1"/>
</dbReference>
<dbReference type="SMR" id="P9WQ78"/>
<dbReference type="GeneID" id="45426591"/>
<dbReference type="KEGG" id="mtc:MT2666"/>
<dbReference type="PATRIC" id="fig|83331.31.peg.2873"/>
<dbReference type="HOGENOM" id="CLU_016922_10_0_11"/>
<dbReference type="UniPathway" id="UPA00733"/>
<dbReference type="Proteomes" id="UP000001020">
    <property type="component" value="Chromosome"/>
</dbReference>
<dbReference type="GO" id="GO:0047298">
    <property type="term" value="F:(S)-3-amino-2-methylpropionate transaminase activity"/>
    <property type="evidence" value="ECO:0007669"/>
    <property type="project" value="UniProtKB-EC"/>
</dbReference>
<dbReference type="GO" id="GO:0034386">
    <property type="term" value="F:4-aminobutyrate:2-oxoglutarate transaminase activity"/>
    <property type="evidence" value="ECO:0007669"/>
    <property type="project" value="UniProtKB-EC"/>
</dbReference>
<dbReference type="GO" id="GO:0042802">
    <property type="term" value="F:identical protein binding"/>
    <property type="evidence" value="ECO:0007669"/>
    <property type="project" value="TreeGrafter"/>
</dbReference>
<dbReference type="GO" id="GO:0030170">
    <property type="term" value="F:pyridoxal phosphate binding"/>
    <property type="evidence" value="ECO:0007669"/>
    <property type="project" value="InterPro"/>
</dbReference>
<dbReference type="GO" id="GO:0009450">
    <property type="term" value="P:gamma-aminobutyric acid catabolic process"/>
    <property type="evidence" value="ECO:0007669"/>
    <property type="project" value="UniProtKB-UniPathway"/>
</dbReference>
<dbReference type="CDD" id="cd00610">
    <property type="entry name" value="OAT_like"/>
    <property type="match status" value="1"/>
</dbReference>
<dbReference type="FunFam" id="3.40.640.10:FF:000013">
    <property type="entry name" value="4-aminobutyrate aminotransferase"/>
    <property type="match status" value="1"/>
</dbReference>
<dbReference type="FunFam" id="3.90.1150.10:FF:000022">
    <property type="entry name" value="4-aminobutyrate aminotransferase"/>
    <property type="match status" value="1"/>
</dbReference>
<dbReference type="Gene3D" id="3.90.1150.10">
    <property type="entry name" value="Aspartate Aminotransferase, domain 1"/>
    <property type="match status" value="1"/>
</dbReference>
<dbReference type="Gene3D" id="3.40.640.10">
    <property type="entry name" value="Type I PLP-dependent aspartate aminotransferase-like (Major domain)"/>
    <property type="match status" value="1"/>
</dbReference>
<dbReference type="InterPro" id="IPR004632">
    <property type="entry name" value="4NH2But_aminotransferase_bac"/>
</dbReference>
<dbReference type="InterPro" id="IPR005814">
    <property type="entry name" value="Aminotrans_3"/>
</dbReference>
<dbReference type="InterPro" id="IPR049704">
    <property type="entry name" value="Aminotrans_3_PPA_site"/>
</dbReference>
<dbReference type="InterPro" id="IPR050103">
    <property type="entry name" value="Class-III_PLP-dep_AT"/>
</dbReference>
<dbReference type="InterPro" id="IPR015424">
    <property type="entry name" value="PyrdxlP-dep_Trfase"/>
</dbReference>
<dbReference type="InterPro" id="IPR015421">
    <property type="entry name" value="PyrdxlP-dep_Trfase_major"/>
</dbReference>
<dbReference type="InterPro" id="IPR015422">
    <property type="entry name" value="PyrdxlP-dep_Trfase_small"/>
</dbReference>
<dbReference type="NCBIfam" id="TIGR00700">
    <property type="entry name" value="GABAtrnsam"/>
    <property type="match status" value="1"/>
</dbReference>
<dbReference type="NCBIfam" id="NF004714">
    <property type="entry name" value="PRK06058.1"/>
    <property type="match status" value="1"/>
</dbReference>
<dbReference type="PANTHER" id="PTHR11986">
    <property type="entry name" value="AMINOTRANSFERASE CLASS III"/>
    <property type="match status" value="1"/>
</dbReference>
<dbReference type="Pfam" id="PF00202">
    <property type="entry name" value="Aminotran_3"/>
    <property type="match status" value="1"/>
</dbReference>
<dbReference type="PIRSF" id="PIRSF000521">
    <property type="entry name" value="Transaminase_4ab_Lys_Orn"/>
    <property type="match status" value="1"/>
</dbReference>
<dbReference type="SUPFAM" id="SSF53383">
    <property type="entry name" value="PLP-dependent transferases"/>
    <property type="match status" value="1"/>
</dbReference>
<dbReference type="PROSITE" id="PS00600">
    <property type="entry name" value="AA_TRANSFER_CLASS_3"/>
    <property type="match status" value="1"/>
</dbReference>
<proteinExistence type="inferred from homology"/>
<evidence type="ECO:0000250" key="1"/>
<evidence type="ECO:0000305" key="2"/>
<sequence length="449" mass="46813">MASLQQSRRLVTEIPGPASQALTHRRAAAVSSGVGVTLPVFVARAGGGIVEDVDGNRLIDLGSGIAVTTIGNSSPRVVDAVRTQVAEFTHTCFMVTPYEGYVAVAEQLNRITPGSGPKRSVLFNSGAEAVENAVKIARSYTGKPAVVAFDHAYHGRTNLTMALTAKSMPYKSGFGPFAPEIYRAPLSYPYRDGLLDKQLATNGELAAARAIGVIDKQVGANNLAALVIEPIQGEGGFIVPAEGFLPALLDWCRKNHVVFIADEVQTGFARTGAMFACEHEGPDGLEPDLICTAKGIADGLPLSAVTGRAEIMNAPHVGGLGGTFGGNPVACAAALATIATIESDGLIERARQIERLVTDRLTTLQAVDDRIGDVRGRGAMIAVELVKSGTTEPDAGLTERLATAAHAAGVIILTCGMFGNIIRLLPPLTIGDELLSEGLDIVCAILADL</sequence>
<protein>
    <recommendedName>
        <fullName>4-aminobutyrate aminotransferase</fullName>
        <ecNumber>2.6.1.19</ecNumber>
    </recommendedName>
    <alternativeName>
        <fullName>(S)-3-amino-2-methylpropionate transaminase</fullName>
        <ecNumber>2.6.1.22</ecNumber>
    </alternativeName>
    <alternativeName>
        <fullName>GABA aminotransferase</fullName>
        <shortName>GABA-AT</shortName>
    </alternativeName>
    <alternativeName>
        <fullName>Gamma-amino-N-butyrate transaminase</fullName>
        <shortName>GABA transaminase</shortName>
    </alternativeName>
    <alternativeName>
        <fullName>Glutamate:succinic semialdehyde transaminase</fullName>
    </alternativeName>
    <alternativeName>
        <fullName>L-AIBAT</fullName>
    </alternativeName>
</protein>
<gene>
    <name type="primary">gabT</name>
    <name type="ordered locus">MT2666</name>
</gene>
<comment type="catalytic activity">
    <reaction>
        <text>4-aminobutanoate + 2-oxoglutarate = succinate semialdehyde + L-glutamate</text>
        <dbReference type="Rhea" id="RHEA:23352"/>
        <dbReference type="ChEBI" id="CHEBI:16810"/>
        <dbReference type="ChEBI" id="CHEBI:29985"/>
        <dbReference type="ChEBI" id="CHEBI:57706"/>
        <dbReference type="ChEBI" id="CHEBI:59888"/>
        <dbReference type="EC" id="2.6.1.19"/>
    </reaction>
</comment>
<comment type="catalytic activity">
    <reaction>
        <text>(S)-3-amino-2-methylpropanoate + 2-oxoglutarate = 2-methyl-3-oxopropanoate + L-glutamate</text>
        <dbReference type="Rhea" id="RHEA:13993"/>
        <dbReference type="ChEBI" id="CHEBI:16810"/>
        <dbReference type="ChEBI" id="CHEBI:29985"/>
        <dbReference type="ChEBI" id="CHEBI:57700"/>
        <dbReference type="ChEBI" id="CHEBI:58655"/>
        <dbReference type="EC" id="2.6.1.22"/>
    </reaction>
</comment>
<comment type="cofactor">
    <cofactor evidence="1">
        <name>pyridoxal 5'-phosphate</name>
        <dbReference type="ChEBI" id="CHEBI:597326"/>
    </cofactor>
</comment>
<comment type="pathway">
    <text>Amino-acid degradation; 4-aminobutanoate degradation.</text>
</comment>
<comment type="similarity">
    <text evidence="2">Belongs to the class-III pyridoxal-phosphate-dependent aminotransferase family.</text>
</comment>
<organism>
    <name type="scientific">Mycobacterium tuberculosis (strain CDC 1551 / Oshkosh)</name>
    <dbReference type="NCBI Taxonomy" id="83331"/>
    <lineage>
        <taxon>Bacteria</taxon>
        <taxon>Bacillati</taxon>
        <taxon>Actinomycetota</taxon>
        <taxon>Actinomycetes</taxon>
        <taxon>Mycobacteriales</taxon>
        <taxon>Mycobacteriaceae</taxon>
        <taxon>Mycobacterium</taxon>
        <taxon>Mycobacterium tuberculosis complex</taxon>
    </lineage>
</organism>
<keyword id="KW-0032">Aminotransferase</keyword>
<keyword id="KW-0663">Pyridoxal phosphate</keyword>
<keyword id="KW-1185">Reference proteome</keyword>
<keyword id="KW-0808">Transferase</keyword>
<accession>P9WQ78</accession>
<accession>L0TA45</accession>
<accession>P63504</accession>
<accession>Q50632</accession>
<reference key="1">
    <citation type="journal article" date="2002" name="J. Bacteriol.">
        <title>Whole-genome comparison of Mycobacterium tuberculosis clinical and laboratory strains.</title>
        <authorList>
            <person name="Fleischmann R.D."/>
            <person name="Alland D."/>
            <person name="Eisen J.A."/>
            <person name="Carpenter L."/>
            <person name="White O."/>
            <person name="Peterson J.D."/>
            <person name="DeBoy R.T."/>
            <person name="Dodson R.J."/>
            <person name="Gwinn M.L."/>
            <person name="Haft D.H."/>
            <person name="Hickey E.K."/>
            <person name="Kolonay J.F."/>
            <person name="Nelson W.C."/>
            <person name="Umayam L.A."/>
            <person name="Ermolaeva M.D."/>
            <person name="Salzberg S.L."/>
            <person name="Delcher A."/>
            <person name="Utterback T.R."/>
            <person name="Weidman J.F."/>
            <person name="Khouri H.M."/>
            <person name="Gill J."/>
            <person name="Mikula A."/>
            <person name="Bishai W."/>
            <person name="Jacobs W.R. Jr."/>
            <person name="Venter J.C."/>
            <person name="Fraser C.M."/>
        </authorList>
    </citation>
    <scope>NUCLEOTIDE SEQUENCE [LARGE SCALE GENOMIC DNA]</scope>
    <source>
        <strain>CDC 1551 / Oshkosh</strain>
    </source>
</reference>
<name>GABT_MYCTO</name>